<comment type="function">
    <text evidence="2">Acts as a secondary carrier for acetate, propionate and pyruvate. Has high affinity for acetate and propionate and lower affinity for pyruvate. Driven by the electrochemical proton potential.</text>
</comment>
<comment type="biophysicochemical properties">
    <kinetics>
        <Vmax evidence="2">143.0 nmol/min/mg enzyme with acetate as substrate</Vmax>
        <Vmax evidence="2">14.0 nmol/min/mg enzyme with propionate as substrate</Vmax>
        <Vmax evidence="2">5.6 nmol/min/mg enzyme with pyruvate as substrate</Vmax>
    </kinetics>
</comment>
<comment type="subcellular location">
    <subcellularLocation>
        <location evidence="4">Cell membrane</location>
        <topology evidence="1">Multi-pass membrane protein</topology>
    </subcellularLocation>
</comment>
<comment type="induction">
    <text evidence="2">Transcriptionally regulated by RamA and RamB.</text>
</comment>
<comment type="similarity">
    <text evidence="4">Belongs to the sodium:solute symporter (SSF) (TC 2.A.21) family.</text>
</comment>
<organism>
    <name type="scientific">Corynebacterium glutamicum (strain ATCC 13032 / DSM 20300 / JCM 1318 / BCRC 11384 / CCUG 27702 / LMG 3730 / NBRC 12168 / NCIMB 10025 / NRRL B-2784 / 534)</name>
    <dbReference type="NCBI Taxonomy" id="196627"/>
    <lineage>
        <taxon>Bacteria</taxon>
        <taxon>Bacillati</taxon>
        <taxon>Actinomycetota</taxon>
        <taxon>Actinomycetes</taxon>
        <taxon>Mycobacteriales</taxon>
        <taxon>Corynebacteriaceae</taxon>
        <taxon>Corynebacterium</taxon>
    </lineage>
</organism>
<protein>
    <recommendedName>
        <fullName evidence="3">Monocarboxylic acid transporter</fullName>
    </recommendedName>
</protein>
<gene>
    <name evidence="3" type="primary">mctC</name>
    <name evidence="5" type="ordered locus">Cgl0833</name>
</gene>
<keyword id="KW-1003">Cell membrane</keyword>
<keyword id="KW-0472">Membrane</keyword>
<keyword id="KW-1185">Reference proteome</keyword>
<keyword id="KW-0769">Symport</keyword>
<keyword id="KW-0812">Transmembrane</keyword>
<keyword id="KW-1133">Transmembrane helix</keyword>
<keyword id="KW-0813">Transport</keyword>
<proteinExistence type="evidence at protein level"/>
<reference key="1">
    <citation type="journal article" date="2003" name="Appl. Microbiol. Biotechnol.">
        <title>The Corynebacterium glutamicum genome: features and impacts on biotechnological processes.</title>
        <authorList>
            <person name="Ikeda M."/>
            <person name="Nakagawa S."/>
        </authorList>
    </citation>
    <scope>NUCLEOTIDE SEQUENCE [LARGE SCALE GENOMIC DNA]</scope>
    <source>
        <strain>ATCC 13032 / DSM 20300 / JCM 1318 / BCRC 11384 / CCUG 27702 / LMG 3730 / NBRC 12168 / NCIMB 10025 / NRRL B-2784 / 534</strain>
    </source>
</reference>
<reference key="2">
    <citation type="journal article" date="2009" name="J. Bacteriol.">
        <title>Identification and characterization of a bacterial transport system for the uptake of pyruvate, propionate, and acetate in Corynebacterium glutamicum.</title>
        <authorList>
            <person name="Jolkver E."/>
            <person name="Emer D."/>
            <person name="Ballan S."/>
            <person name="Kraemer R."/>
            <person name="Eikmanns B.J."/>
            <person name="Marin K."/>
        </authorList>
    </citation>
    <scope>FUNCTION</scope>
    <scope>BIOPHYSICOCHEMICAL PROPERTIES</scope>
    <scope>INDUCTION</scope>
    <source>
        <strain>ATCC 13032 / DSM 20300 / JCM 1318 / BCRC 11384 / CCUG 27702 / LMG 3730 / NBRC 12168 / NCIMB 10025 / NRRL B-2784 / 534</strain>
    </source>
</reference>
<accession>Q8NS49</accession>
<accession>Q6M6V3</accession>
<feature type="chain" id="PRO_0000440952" description="Monocarboxylic acid transporter">
    <location>
        <begin position="1"/>
        <end position="551"/>
    </location>
</feature>
<feature type="transmembrane region" description="Helical" evidence="1">
    <location>
        <begin position="18"/>
        <end position="38"/>
    </location>
</feature>
<feature type="transmembrane region" description="Helical" evidence="1">
    <location>
        <begin position="63"/>
        <end position="83"/>
    </location>
</feature>
<feature type="transmembrane region" description="Helical" evidence="1">
    <location>
        <begin position="90"/>
        <end position="110"/>
    </location>
</feature>
<feature type="transmembrane region" description="Helical" evidence="1">
    <location>
        <begin position="144"/>
        <end position="164"/>
    </location>
</feature>
<feature type="transmembrane region" description="Helical" evidence="1">
    <location>
        <begin position="171"/>
        <end position="191"/>
    </location>
</feature>
<feature type="transmembrane region" description="Helical" evidence="1">
    <location>
        <begin position="203"/>
        <end position="223"/>
    </location>
</feature>
<feature type="transmembrane region" description="Helical" evidence="1">
    <location>
        <begin position="267"/>
        <end position="287"/>
    </location>
</feature>
<feature type="transmembrane region" description="Helical" evidence="1">
    <location>
        <begin position="307"/>
        <end position="327"/>
    </location>
</feature>
<feature type="transmembrane region" description="Helical" evidence="1">
    <location>
        <begin position="355"/>
        <end position="375"/>
    </location>
</feature>
<feature type="transmembrane region" description="Helical" evidence="1">
    <location>
        <begin position="411"/>
        <end position="431"/>
    </location>
</feature>
<feature type="transmembrane region" description="Helical" evidence="1">
    <location>
        <begin position="432"/>
        <end position="452"/>
    </location>
</feature>
<feature type="transmembrane region" description="Helical" evidence="1">
    <location>
        <begin position="463"/>
        <end position="483"/>
    </location>
</feature>
<feature type="transmembrane region" description="Helical" evidence="1">
    <location>
        <begin position="503"/>
        <end position="523"/>
    </location>
</feature>
<name>MCTC_CORGL</name>
<evidence type="ECO:0000255" key="1"/>
<evidence type="ECO:0000269" key="2">
    <source>
    </source>
</evidence>
<evidence type="ECO:0000303" key="3">
    <source>
    </source>
</evidence>
<evidence type="ECO:0000305" key="4"/>
<evidence type="ECO:0000312" key="5">
    <source>
        <dbReference type="EMBL" id="BAB98226.1"/>
    </source>
</evidence>
<sequence length="551" mass="57268">MNSTILLAQDAVSEGVGNPILNISVFVVFIIVTMTVVLRVGKSTSESTDFYTGGASFSGTQNGLAIAGDYLSAASFLGIVGAISLNGYDGFLYSIGFFVAWLVALLLVAEPLRNVGRFTMADVLSFRLRQKPVRVAAACGTLAVTLFYLIAQMAGAGSLVSVLLDIHEFKWQAVVVGIVGIVMIAYVLLGGMKGTTYVQMIKAVLLVGGVAIMTVLTFVKVSGGLTTLLNDAVEKHAASDYAATKGYDPTQILEPGLQYGATLTTQLDFISLALALCLGTAGLPHVLMRFYTVPTAKEARKSVTWAIVLIGAFYLMTLVLGYGAAALVGPDRVIAAPGAANAAAPLLAFELGGSIFMALISAVAFATVLAVVAGLAITASAAVGHDIYNAVIRNGQSTEAEQVRVSRITVVVIGLISIVLGILAMTQNVAFLVALAFAVAASANLPTILYSLYWKKFNTTGAVAAIYTGLISALLLIFLSPAVSGNDSAMVPGADWAIFPLKNPGLVSIPLAFIAGWIGTLVGKPDNMDDLAAEMEVRSLTGVGVEKAVDH</sequence>
<dbReference type="EMBL" id="BA000036">
    <property type="protein sequence ID" value="BAB98226.1"/>
    <property type="molecule type" value="Genomic_DNA"/>
</dbReference>
<dbReference type="RefSeq" id="NP_600062.1">
    <property type="nucleotide sequence ID" value="NC_003450.3"/>
</dbReference>
<dbReference type="RefSeq" id="WP_011013917.1">
    <property type="nucleotide sequence ID" value="NC_006958.1"/>
</dbReference>
<dbReference type="SMR" id="Q8NS49"/>
<dbReference type="STRING" id="196627.cg0953"/>
<dbReference type="TCDB" id="2.A.21.7.3">
    <property type="family name" value="the solute:sodium symporter (sss) family"/>
</dbReference>
<dbReference type="KEGG" id="cgb:cg0953"/>
<dbReference type="KEGG" id="cgl:Cgl0833"/>
<dbReference type="PATRIC" id="fig|196627.13.peg.817"/>
<dbReference type="eggNOG" id="COG4147">
    <property type="taxonomic scope" value="Bacteria"/>
</dbReference>
<dbReference type="HOGENOM" id="CLU_018808_8_3_11"/>
<dbReference type="OrthoDB" id="9764416at2"/>
<dbReference type="BioCyc" id="CORYNE:G18NG-10402-MONOMER"/>
<dbReference type="Proteomes" id="UP000000582">
    <property type="component" value="Chromosome"/>
</dbReference>
<dbReference type="GO" id="GO:0005886">
    <property type="term" value="C:plasma membrane"/>
    <property type="evidence" value="ECO:0007669"/>
    <property type="project" value="UniProtKB-SubCell"/>
</dbReference>
<dbReference type="GO" id="GO:0015123">
    <property type="term" value="F:acetate transmembrane transporter activity"/>
    <property type="evidence" value="ECO:0007669"/>
    <property type="project" value="TreeGrafter"/>
</dbReference>
<dbReference type="GO" id="GO:0015293">
    <property type="term" value="F:symporter activity"/>
    <property type="evidence" value="ECO:0007669"/>
    <property type="project" value="UniProtKB-KW"/>
</dbReference>
<dbReference type="GO" id="GO:0006847">
    <property type="term" value="P:plasma membrane acetate transport"/>
    <property type="evidence" value="ECO:0007669"/>
    <property type="project" value="TreeGrafter"/>
</dbReference>
<dbReference type="CDD" id="cd11480">
    <property type="entry name" value="SLC5sbd_u4"/>
    <property type="match status" value="1"/>
</dbReference>
<dbReference type="Gene3D" id="1.20.1730.10">
    <property type="entry name" value="Sodium/glucose cotransporter"/>
    <property type="match status" value="1"/>
</dbReference>
<dbReference type="InterPro" id="IPR038377">
    <property type="entry name" value="Na/Glc_symporter_sf"/>
</dbReference>
<dbReference type="InterPro" id="IPR001734">
    <property type="entry name" value="Na/solute_symporter"/>
</dbReference>
<dbReference type="InterPro" id="IPR050277">
    <property type="entry name" value="Sodium:Solute_Symporter"/>
</dbReference>
<dbReference type="PANTHER" id="PTHR48086:SF6">
    <property type="entry name" value="CATION_ACETATE SYMPORTER ACTP"/>
    <property type="match status" value="1"/>
</dbReference>
<dbReference type="PANTHER" id="PTHR48086">
    <property type="entry name" value="SODIUM/PROLINE SYMPORTER-RELATED"/>
    <property type="match status" value="1"/>
</dbReference>
<dbReference type="Pfam" id="PF00474">
    <property type="entry name" value="SSF"/>
    <property type="match status" value="1"/>
</dbReference>
<dbReference type="PROSITE" id="PS50283">
    <property type="entry name" value="NA_SOLUT_SYMP_3"/>
    <property type="match status" value="1"/>
</dbReference>